<feature type="chain" id="PRO_0000366791" description="Ribosomal RNA large subunit methyltransferase K/L">
    <location>
        <begin position="1"/>
        <end position="730"/>
    </location>
</feature>
<feature type="domain" description="THUMP" evidence="1">
    <location>
        <begin position="46"/>
        <end position="157"/>
    </location>
</feature>
<feature type="region of interest" description="Disordered" evidence="2">
    <location>
        <begin position="394"/>
        <end position="418"/>
    </location>
</feature>
<proteinExistence type="inferred from homology"/>
<reference key="1">
    <citation type="submission" date="2007-05" db="EMBL/GenBank/DDBJ databases">
        <title>Complete sequence of Pseudomonas putida F1.</title>
        <authorList>
            <consortium name="US DOE Joint Genome Institute"/>
            <person name="Copeland A."/>
            <person name="Lucas S."/>
            <person name="Lapidus A."/>
            <person name="Barry K."/>
            <person name="Detter J.C."/>
            <person name="Glavina del Rio T."/>
            <person name="Hammon N."/>
            <person name="Israni S."/>
            <person name="Dalin E."/>
            <person name="Tice H."/>
            <person name="Pitluck S."/>
            <person name="Chain P."/>
            <person name="Malfatti S."/>
            <person name="Shin M."/>
            <person name="Vergez L."/>
            <person name="Schmutz J."/>
            <person name="Larimer F."/>
            <person name="Land M."/>
            <person name="Hauser L."/>
            <person name="Kyrpides N."/>
            <person name="Lykidis A."/>
            <person name="Parales R."/>
            <person name="Richardson P."/>
        </authorList>
    </citation>
    <scope>NUCLEOTIDE SEQUENCE [LARGE SCALE GENOMIC DNA]</scope>
    <source>
        <strain>ATCC 700007 / DSM 6899 / JCM 31910 / BCRC 17059 / LMG 24140 / F1</strain>
    </source>
</reference>
<accession>A5W6K7</accession>
<evidence type="ECO:0000255" key="1">
    <source>
        <dbReference type="HAMAP-Rule" id="MF_01858"/>
    </source>
</evidence>
<evidence type="ECO:0000256" key="2">
    <source>
        <dbReference type="SAM" id="MobiDB-lite"/>
    </source>
</evidence>
<evidence type="ECO:0000305" key="3"/>
<comment type="function">
    <text evidence="1">Specifically methylates the guanine in position 2445 (m2G2445) and the guanine in position 2069 (m7G2069) of 23S rRNA.</text>
</comment>
<comment type="catalytic activity">
    <reaction evidence="1">
        <text>guanosine(2445) in 23S rRNA + S-adenosyl-L-methionine = N(2)-methylguanosine(2445) in 23S rRNA + S-adenosyl-L-homocysteine + H(+)</text>
        <dbReference type="Rhea" id="RHEA:42740"/>
        <dbReference type="Rhea" id="RHEA-COMP:10215"/>
        <dbReference type="Rhea" id="RHEA-COMP:10216"/>
        <dbReference type="ChEBI" id="CHEBI:15378"/>
        <dbReference type="ChEBI" id="CHEBI:57856"/>
        <dbReference type="ChEBI" id="CHEBI:59789"/>
        <dbReference type="ChEBI" id="CHEBI:74269"/>
        <dbReference type="ChEBI" id="CHEBI:74481"/>
        <dbReference type="EC" id="2.1.1.173"/>
    </reaction>
</comment>
<comment type="catalytic activity">
    <reaction evidence="1">
        <text>guanosine(2069) in 23S rRNA + S-adenosyl-L-methionine = N(2)-methylguanosine(2069) in 23S rRNA + S-adenosyl-L-homocysteine + H(+)</text>
        <dbReference type="Rhea" id="RHEA:43772"/>
        <dbReference type="Rhea" id="RHEA-COMP:10688"/>
        <dbReference type="Rhea" id="RHEA-COMP:10689"/>
        <dbReference type="ChEBI" id="CHEBI:15378"/>
        <dbReference type="ChEBI" id="CHEBI:57856"/>
        <dbReference type="ChEBI" id="CHEBI:59789"/>
        <dbReference type="ChEBI" id="CHEBI:74269"/>
        <dbReference type="ChEBI" id="CHEBI:74481"/>
        <dbReference type="EC" id="2.1.1.264"/>
    </reaction>
</comment>
<comment type="subcellular location">
    <subcellularLocation>
        <location evidence="1">Cytoplasm</location>
    </subcellularLocation>
</comment>
<comment type="similarity">
    <text evidence="1">Belongs to the methyltransferase superfamily. RlmKL family.</text>
</comment>
<comment type="sequence caution" evidence="3">
    <conflict type="erroneous initiation">
        <sequence resource="EMBL-CDS" id="ABQ79767"/>
    </conflict>
    <text>Extended N-terminus.</text>
</comment>
<organism>
    <name type="scientific">Pseudomonas putida (strain ATCC 700007 / DSM 6899 / JCM 31910 / BCRC 17059 / LMG 24140 / F1)</name>
    <dbReference type="NCBI Taxonomy" id="351746"/>
    <lineage>
        <taxon>Bacteria</taxon>
        <taxon>Pseudomonadati</taxon>
        <taxon>Pseudomonadota</taxon>
        <taxon>Gammaproteobacteria</taxon>
        <taxon>Pseudomonadales</taxon>
        <taxon>Pseudomonadaceae</taxon>
        <taxon>Pseudomonas</taxon>
    </lineage>
</organism>
<dbReference type="EC" id="2.1.1.173" evidence="1"/>
<dbReference type="EC" id="2.1.1.264" evidence="1"/>
<dbReference type="EMBL" id="CP000712">
    <property type="protein sequence ID" value="ABQ79767.1"/>
    <property type="status" value="ALT_INIT"/>
    <property type="molecule type" value="Genomic_DNA"/>
</dbReference>
<dbReference type="SMR" id="A5W6K7"/>
<dbReference type="KEGG" id="ppf:Pput_3643"/>
<dbReference type="eggNOG" id="COG0116">
    <property type="taxonomic scope" value="Bacteria"/>
</dbReference>
<dbReference type="eggNOG" id="COG1092">
    <property type="taxonomic scope" value="Bacteria"/>
</dbReference>
<dbReference type="HOGENOM" id="CLU_014042_2_0_6"/>
<dbReference type="GO" id="GO:0005737">
    <property type="term" value="C:cytoplasm"/>
    <property type="evidence" value="ECO:0007669"/>
    <property type="project" value="UniProtKB-SubCell"/>
</dbReference>
<dbReference type="GO" id="GO:0052915">
    <property type="term" value="F:23S rRNA (guanine(2445)-N(2))-methyltransferase activity"/>
    <property type="evidence" value="ECO:0007669"/>
    <property type="project" value="UniProtKB-UniRule"/>
</dbReference>
<dbReference type="GO" id="GO:0003723">
    <property type="term" value="F:RNA binding"/>
    <property type="evidence" value="ECO:0007669"/>
    <property type="project" value="UniProtKB-KW"/>
</dbReference>
<dbReference type="GO" id="GO:0070043">
    <property type="term" value="F:rRNA (guanine-N7-)-methyltransferase activity"/>
    <property type="evidence" value="ECO:0007669"/>
    <property type="project" value="UniProtKB-UniRule"/>
</dbReference>
<dbReference type="CDD" id="cd02440">
    <property type="entry name" value="AdoMet_MTases"/>
    <property type="match status" value="1"/>
</dbReference>
<dbReference type="CDD" id="cd11715">
    <property type="entry name" value="THUMP_AdoMetMT"/>
    <property type="match status" value="1"/>
</dbReference>
<dbReference type="Gene3D" id="3.30.2130.30">
    <property type="match status" value="1"/>
</dbReference>
<dbReference type="Gene3D" id="3.30.750.80">
    <property type="entry name" value="RNA methyltransferase domain (HRMD) like"/>
    <property type="match status" value="1"/>
</dbReference>
<dbReference type="Gene3D" id="3.40.50.150">
    <property type="entry name" value="Vaccinia Virus protein VP39"/>
    <property type="match status" value="2"/>
</dbReference>
<dbReference type="HAMAP" id="MF_01858">
    <property type="entry name" value="23SrRNA_methyltr_KL"/>
    <property type="match status" value="1"/>
</dbReference>
<dbReference type="InterPro" id="IPR017244">
    <property type="entry name" value="23SrRNA_methyltr_KL"/>
</dbReference>
<dbReference type="InterPro" id="IPR002052">
    <property type="entry name" value="DNA_methylase_N6_adenine_CS"/>
</dbReference>
<dbReference type="InterPro" id="IPR000241">
    <property type="entry name" value="RlmKL-like_Mtase"/>
</dbReference>
<dbReference type="InterPro" id="IPR054170">
    <property type="entry name" value="RlmL_1st"/>
</dbReference>
<dbReference type="InterPro" id="IPR019614">
    <property type="entry name" value="SAM-dep_methyl-trfase"/>
</dbReference>
<dbReference type="InterPro" id="IPR029063">
    <property type="entry name" value="SAM-dependent_MTases_sf"/>
</dbReference>
<dbReference type="InterPro" id="IPR004114">
    <property type="entry name" value="THUMP_dom"/>
</dbReference>
<dbReference type="NCBIfam" id="NF008748">
    <property type="entry name" value="PRK11783.1"/>
    <property type="match status" value="1"/>
</dbReference>
<dbReference type="PANTHER" id="PTHR47313">
    <property type="entry name" value="RIBOSOMAL RNA LARGE SUBUNIT METHYLTRANSFERASE K/L"/>
    <property type="match status" value="1"/>
</dbReference>
<dbReference type="PANTHER" id="PTHR47313:SF1">
    <property type="entry name" value="RIBOSOMAL RNA LARGE SUBUNIT METHYLTRANSFERASE K_L"/>
    <property type="match status" value="1"/>
</dbReference>
<dbReference type="Pfam" id="PF10672">
    <property type="entry name" value="Methyltrans_SAM"/>
    <property type="match status" value="1"/>
</dbReference>
<dbReference type="Pfam" id="PF22020">
    <property type="entry name" value="RlmL_1st"/>
    <property type="match status" value="1"/>
</dbReference>
<dbReference type="Pfam" id="PF02926">
    <property type="entry name" value="THUMP"/>
    <property type="match status" value="1"/>
</dbReference>
<dbReference type="Pfam" id="PF01170">
    <property type="entry name" value="UPF0020"/>
    <property type="match status" value="1"/>
</dbReference>
<dbReference type="PIRSF" id="PIRSF037618">
    <property type="entry name" value="RNA_Mtase_bacteria_prd"/>
    <property type="match status" value="1"/>
</dbReference>
<dbReference type="SMART" id="SM00981">
    <property type="entry name" value="THUMP"/>
    <property type="match status" value="1"/>
</dbReference>
<dbReference type="SUPFAM" id="SSF53335">
    <property type="entry name" value="S-adenosyl-L-methionine-dependent methyltransferases"/>
    <property type="match status" value="2"/>
</dbReference>
<dbReference type="PROSITE" id="PS51165">
    <property type="entry name" value="THUMP"/>
    <property type="match status" value="1"/>
</dbReference>
<name>RLMKL_PSEP1</name>
<sequence>MSDRFELYLTCPKGLESLLAEEAKGLGLDEVREHTSAIRGAADMETAYRLCVWSRLANRVLLVLKRFSMKNADDLYDGVHAVDWADHLAADGTLAVEFSGHGSGIDNTHFGALKVKDAIVDKLRNREGLRPSVEKIDPDVRVHLRLDRGEAILSLDLSGHSLHQRGYRLQQGAAPLKENLAAAVLIRAGWPRIAAEGGALADPMCGVGTFLVEAAMIAADIAPNLKRERWGFSAWLGHVPALWRKVHDEAQARAQAGLAKPPLWIRGYEADPRLIQPGRNNVERAGLGDWVKIYQGEVSTFEPRPDQNQKGLVISNPPYGERLGDEASLLYLYQNLGERLRQACMGWEAAVFTGAPQLGKRMGIRSHKQYAFWNGALPCKLLLFKVQPDQFVTGERREAQPEGTEARQQVPQASEPARLSEGAQMFANRLQKNLKQLGKWARREQIDCYRLYDADMPEYALAVDLYQDWVHVQEYAAPRSVDPDKAQARLLDALAAIPQALGISPQRVVLKRRERQSGTRQYERQATEGRFQEVNEGGVKLLVNLTDYLDTGLFLDHRPMRMRIQREAAGKRFLNLFCYTATATVHAAKGGARSTTSVDLSKTYLDWARRNLALNGYSERNRLEQSDVMAWLEGNRDSYDLIFIDPPTFSNSKRMEGVFDVQRDHVQLLDLAMARLAPGGVLYFSNNFRKFQLDEHLMARYVVEEISAQTLDPDFARNNRIHRAWRLQLR</sequence>
<keyword id="KW-0963">Cytoplasm</keyword>
<keyword id="KW-0489">Methyltransferase</keyword>
<keyword id="KW-0694">RNA-binding</keyword>
<keyword id="KW-0698">rRNA processing</keyword>
<keyword id="KW-0949">S-adenosyl-L-methionine</keyword>
<keyword id="KW-0808">Transferase</keyword>
<protein>
    <recommendedName>
        <fullName evidence="1">Ribosomal RNA large subunit methyltransferase K/L</fullName>
    </recommendedName>
    <domain>
        <recommendedName>
            <fullName evidence="1">23S rRNA m2G2445 methyltransferase</fullName>
            <ecNumber evidence="1">2.1.1.173</ecNumber>
        </recommendedName>
        <alternativeName>
            <fullName evidence="1">rRNA (guanine-N(2)-)-methyltransferase RlmL</fullName>
        </alternativeName>
    </domain>
    <domain>
        <recommendedName>
            <fullName evidence="1">23S rRNA m7G2069 methyltransferase</fullName>
            <ecNumber evidence="1">2.1.1.264</ecNumber>
        </recommendedName>
        <alternativeName>
            <fullName evidence="1">rRNA (guanine-N(7)-)-methyltransferase RlmK</fullName>
        </alternativeName>
    </domain>
</protein>
<gene>
    <name evidence="1" type="primary">rlmL</name>
    <name type="ordered locus">Pput_3643</name>
</gene>